<name>PYS1_MASLA</name>
<evidence type="ECO:0000255" key="1">
    <source>
        <dbReference type="PROSITE-ProRule" id="PRU00771"/>
    </source>
</evidence>
<evidence type="ECO:0000305" key="2"/>
<proteinExistence type="evidence at protein level"/>
<organism>
    <name type="scientific">Mastigocladus laminosus</name>
    <name type="common">Fischerella sp.</name>
    <dbReference type="NCBI Taxonomy" id="83541"/>
    <lineage>
        <taxon>Bacteria</taxon>
        <taxon>Bacillati</taxon>
        <taxon>Cyanobacteriota</taxon>
        <taxon>Cyanophyceae</taxon>
        <taxon>Nostocales</taxon>
        <taxon>Hapalosiphonaceae</taxon>
        <taxon>Mastigocladus</taxon>
    </lineage>
</organism>
<reference key="1">
    <citation type="submission" date="1992-01" db="EMBL/GenBank/DDBJ databases">
        <title>Structure and molecular evolution of the gene cluster encoding proteins of the rod substructure of the phycobilisome from the cyanobacterium Mastigocadus laminosus.</title>
        <authorList>
            <person name="Kufer W."/>
            <person name="Hoegner A."/>
            <person name="Eberlein M."/>
            <person name="Mayer K."/>
            <person name="Buchner A."/>
            <person name="Gottschalk L."/>
        </authorList>
    </citation>
    <scope>NUCLEOTIDE SEQUENCE [GENOMIC DNA]</scope>
</reference>
<reference key="2">
    <citation type="journal article" date="1985" name="Biol. Chem. Hoppe-Seyler">
        <title>Linker polypeptides of the phycobilisome from the cyanobacterium Mastigocladus laminosus: amino-acid sequences and relationships.</title>
        <authorList>
            <person name="Fueglistaller P."/>
            <person name="Suter F."/>
            <person name="Zuber H."/>
        </authorList>
    </citation>
    <scope>PROTEIN SEQUENCE</scope>
</reference>
<sequence length="80" mass="9109">MFGQTTLGIDSVSSSASRVFRFEVVGMRQNEENDKNKYNIRRSGSVYITVPYNRMSEEMQRIHRLGGKIVKIEPLTRAAG</sequence>
<feature type="chain" id="PRO_0000199227" description="Phycobilisome 8.9 kDa linker polypeptide, phycocyanin-associated, rod">
    <location>
        <begin position="1"/>
        <end position="80"/>
    </location>
</feature>
<feature type="domain" description="CpcD-like" evidence="1">
    <location>
        <begin position="17"/>
        <end position="75"/>
    </location>
</feature>
<gene>
    <name type="primary">cpcD</name>
</gene>
<dbReference type="EMBL" id="M75599">
    <property type="protein sequence ID" value="AAC64652.1"/>
    <property type="molecule type" value="Genomic_DNA"/>
</dbReference>
<dbReference type="SMR" id="P11396"/>
<dbReference type="GO" id="GO:0030089">
    <property type="term" value="C:phycobilisome"/>
    <property type="evidence" value="ECO:0007669"/>
    <property type="project" value="UniProtKB-KW"/>
</dbReference>
<dbReference type="GO" id="GO:0031676">
    <property type="term" value="C:plasma membrane-derived thylakoid membrane"/>
    <property type="evidence" value="ECO:0007669"/>
    <property type="project" value="UniProtKB-SubCell"/>
</dbReference>
<dbReference type="GO" id="GO:0015979">
    <property type="term" value="P:photosynthesis"/>
    <property type="evidence" value="ECO:0007669"/>
    <property type="project" value="UniProtKB-KW"/>
</dbReference>
<dbReference type="InterPro" id="IPR011064">
    <property type="entry name" value="Allophyco_linker_chain"/>
</dbReference>
<dbReference type="InterPro" id="IPR008213">
    <property type="entry name" value="CpcD-like_dom"/>
</dbReference>
<dbReference type="Pfam" id="PF01383">
    <property type="entry name" value="CpcD"/>
    <property type="match status" value="1"/>
</dbReference>
<dbReference type="SMART" id="SM01094">
    <property type="entry name" value="CpcD"/>
    <property type="match status" value="1"/>
</dbReference>
<dbReference type="SUPFAM" id="SSF54580">
    <property type="entry name" value="Allophycocyanin linker chain (domain)"/>
    <property type="match status" value="1"/>
</dbReference>
<dbReference type="PROSITE" id="PS51441">
    <property type="entry name" value="CPCD_LIKE"/>
    <property type="match status" value="1"/>
</dbReference>
<comment type="function">
    <text>Rod linker protein, associated with phycocyanin. Linker polypeptides determine the state of aggregation and the location of the disk-shaped phycobiliprotein units within the phycobilisome and modulate their spectroscopic properties in order to mediate a directed and optimal energy transfer.</text>
</comment>
<comment type="subcellular location">
    <subcellularLocation>
        <location>Cellular thylakoid membrane</location>
        <topology>Peripheral membrane protein</topology>
        <orientation>Cytoplasmic side</orientation>
    </subcellularLocation>
    <text evidence="2">This protein occurs in the rod, it is associated with phycocyanin.</text>
</comment>
<comment type="similarity">
    <text evidence="2">Belongs to the phycobilisome linker protein family.</text>
</comment>
<accession>P11396</accession>
<keyword id="KW-0042">Antenna complex</keyword>
<keyword id="KW-0903">Direct protein sequencing</keyword>
<keyword id="KW-0472">Membrane</keyword>
<keyword id="KW-0602">Photosynthesis</keyword>
<keyword id="KW-0605">Phycobilisome</keyword>
<keyword id="KW-0793">Thylakoid</keyword>
<protein>
    <recommendedName>
        <fullName>Phycobilisome 8.9 kDa linker polypeptide, phycocyanin-associated, rod</fullName>
    </recommendedName>
    <alternativeName>
        <fullName>Rod-capping linker protein</fullName>
    </alternativeName>
</protein>